<feature type="transit peptide" description="Mitochondrion" evidence="3">
    <location>
        <begin position="1"/>
        <end position="46"/>
    </location>
</feature>
<feature type="chain" id="PRO_0000001236" description="5-aminolevulinate synthase, mitochondrial">
    <location>
        <begin position="47"/>
        <end position="556"/>
    </location>
</feature>
<feature type="active site" evidence="2">
    <location>
        <position position="345"/>
    </location>
</feature>
<feature type="binding site" evidence="2">
    <location>
        <position position="105"/>
    </location>
    <ligand>
        <name>substrate</name>
    </ligand>
</feature>
<feature type="binding site" evidence="2">
    <location>
        <position position="218"/>
    </location>
    <ligand>
        <name>substrate</name>
    </ligand>
</feature>
<feature type="binding site" evidence="2">
    <location>
        <position position="237"/>
    </location>
    <ligand>
        <name>substrate</name>
    </ligand>
</feature>
<feature type="binding site" description="in other chain" evidence="2">
    <location>
        <position position="270"/>
    </location>
    <ligand>
        <name>pyridoxal 5'-phosphate</name>
        <dbReference type="ChEBI" id="CHEBI:597326"/>
        <note>ligand shared between dimeric partners</note>
    </ligand>
</feature>
<feature type="binding site" description="in other chain" evidence="2">
    <location>
        <position position="298"/>
    </location>
    <ligand>
        <name>pyridoxal 5'-phosphate</name>
        <dbReference type="ChEBI" id="CHEBI:597326"/>
        <note>ligand shared between dimeric partners</note>
    </ligand>
</feature>
<feature type="binding site" description="in other chain" evidence="2">
    <location>
        <position position="342"/>
    </location>
    <ligand>
        <name>pyridoxal 5'-phosphate</name>
        <dbReference type="ChEBI" id="CHEBI:597326"/>
        <note>ligand shared between dimeric partners</note>
    </ligand>
</feature>
<feature type="binding site" evidence="2">
    <location>
        <position position="374"/>
    </location>
    <ligand>
        <name>pyridoxal 5'-phosphate</name>
        <dbReference type="ChEBI" id="CHEBI:597326"/>
        <note>ligand shared between dimeric partners</note>
    </ligand>
</feature>
<feature type="binding site" evidence="2">
    <location>
        <position position="375"/>
    </location>
    <ligand>
        <name>pyridoxal 5'-phosphate</name>
        <dbReference type="ChEBI" id="CHEBI:597326"/>
        <note>ligand shared between dimeric partners</note>
    </ligand>
</feature>
<feature type="binding site" evidence="2">
    <location>
        <position position="460"/>
    </location>
    <ligand>
        <name>substrate</name>
    </ligand>
</feature>
<feature type="modified residue" description="N6-(pyridoxal phosphate)lysine" evidence="2">
    <location>
        <position position="345"/>
    </location>
</feature>
<dbReference type="EC" id="2.3.1.37"/>
<dbReference type="EMBL" id="AE016815">
    <property type="protein sequence ID" value="AAS50667.1"/>
    <property type="molecule type" value="Genomic_DNA"/>
</dbReference>
<dbReference type="RefSeq" id="NP_982843.1">
    <property type="nucleotide sequence ID" value="NM_208196.1"/>
</dbReference>
<dbReference type="SMR" id="Q75DX7"/>
<dbReference type="FunCoup" id="Q75DX7">
    <property type="interactions" value="485"/>
</dbReference>
<dbReference type="STRING" id="284811.Q75DX7"/>
<dbReference type="EnsemblFungi" id="AAS50667">
    <property type="protein sequence ID" value="AAS50667"/>
    <property type="gene ID" value="AGOS_ABL104C"/>
</dbReference>
<dbReference type="GeneID" id="4618923"/>
<dbReference type="KEGG" id="ago:AGOS_ABL104C"/>
<dbReference type="eggNOG" id="KOG1360">
    <property type="taxonomic scope" value="Eukaryota"/>
</dbReference>
<dbReference type="HOGENOM" id="CLU_015846_6_0_1"/>
<dbReference type="InParanoid" id="Q75DX7"/>
<dbReference type="OMA" id="ARRCPIM"/>
<dbReference type="OrthoDB" id="10263824at2759"/>
<dbReference type="UniPathway" id="UPA00251">
    <property type="reaction ID" value="UER00375"/>
</dbReference>
<dbReference type="Proteomes" id="UP000000591">
    <property type="component" value="Chromosome II"/>
</dbReference>
<dbReference type="GO" id="GO:0005759">
    <property type="term" value="C:mitochondrial matrix"/>
    <property type="evidence" value="ECO:0007669"/>
    <property type="project" value="UniProtKB-SubCell"/>
</dbReference>
<dbReference type="GO" id="GO:0005739">
    <property type="term" value="C:mitochondrion"/>
    <property type="evidence" value="ECO:0000318"/>
    <property type="project" value="GO_Central"/>
</dbReference>
<dbReference type="GO" id="GO:0003870">
    <property type="term" value="F:5-aminolevulinate synthase activity"/>
    <property type="evidence" value="ECO:0000318"/>
    <property type="project" value="GO_Central"/>
</dbReference>
<dbReference type="GO" id="GO:0030170">
    <property type="term" value="F:pyridoxal phosphate binding"/>
    <property type="evidence" value="ECO:0007669"/>
    <property type="project" value="InterPro"/>
</dbReference>
<dbReference type="GO" id="GO:0006783">
    <property type="term" value="P:heme biosynthetic process"/>
    <property type="evidence" value="ECO:0000318"/>
    <property type="project" value="GO_Central"/>
</dbReference>
<dbReference type="GO" id="GO:1902117">
    <property type="term" value="P:positive regulation of organelle assembly"/>
    <property type="evidence" value="ECO:0007669"/>
    <property type="project" value="EnsemblFungi"/>
</dbReference>
<dbReference type="GO" id="GO:0006782">
    <property type="term" value="P:protoporphyrinogen IX biosynthetic process"/>
    <property type="evidence" value="ECO:0007669"/>
    <property type="project" value="UniProtKB-UniPathway"/>
</dbReference>
<dbReference type="CDD" id="cd06454">
    <property type="entry name" value="KBL_like"/>
    <property type="match status" value="1"/>
</dbReference>
<dbReference type="FunFam" id="3.40.640.10:FF:000006">
    <property type="entry name" value="5-aminolevulinate synthase, mitochondrial"/>
    <property type="match status" value="1"/>
</dbReference>
<dbReference type="Gene3D" id="3.90.1150.10">
    <property type="entry name" value="Aspartate Aminotransferase, domain 1"/>
    <property type="match status" value="1"/>
</dbReference>
<dbReference type="Gene3D" id="3.40.640.10">
    <property type="entry name" value="Type I PLP-dependent aspartate aminotransferase-like (Major domain)"/>
    <property type="match status" value="1"/>
</dbReference>
<dbReference type="InterPro" id="IPR010961">
    <property type="entry name" value="4pyrrol_synth_NH2levulA_synth"/>
</dbReference>
<dbReference type="InterPro" id="IPR001917">
    <property type="entry name" value="Aminotrans_II_pyridoxalP_BS"/>
</dbReference>
<dbReference type="InterPro" id="IPR004839">
    <property type="entry name" value="Aminotransferase_I/II_large"/>
</dbReference>
<dbReference type="InterPro" id="IPR050087">
    <property type="entry name" value="AON_synthase_class-II"/>
</dbReference>
<dbReference type="InterPro" id="IPR015424">
    <property type="entry name" value="PyrdxlP-dep_Trfase"/>
</dbReference>
<dbReference type="InterPro" id="IPR015421">
    <property type="entry name" value="PyrdxlP-dep_Trfase_major"/>
</dbReference>
<dbReference type="InterPro" id="IPR015422">
    <property type="entry name" value="PyrdxlP-dep_Trfase_small"/>
</dbReference>
<dbReference type="NCBIfam" id="TIGR01821">
    <property type="entry name" value="5aminolev_synth"/>
    <property type="match status" value="1"/>
</dbReference>
<dbReference type="PANTHER" id="PTHR13693:SF102">
    <property type="entry name" value="2-AMINO-3-KETOBUTYRATE COENZYME A LIGASE, MITOCHONDRIAL"/>
    <property type="match status" value="1"/>
</dbReference>
<dbReference type="PANTHER" id="PTHR13693">
    <property type="entry name" value="CLASS II AMINOTRANSFERASE/8-AMINO-7-OXONONANOATE SYNTHASE"/>
    <property type="match status" value="1"/>
</dbReference>
<dbReference type="Pfam" id="PF00155">
    <property type="entry name" value="Aminotran_1_2"/>
    <property type="match status" value="1"/>
</dbReference>
<dbReference type="SUPFAM" id="SSF53383">
    <property type="entry name" value="PLP-dependent transferases"/>
    <property type="match status" value="1"/>
</dbReference>
<dbReference type="PROSITE" id="PS00599">
    <property type="entry name" value="AA_TRANSFER_CLASS_2"/>
    <property type="match status" value="1"/>
</dbReference>
<protein>
    <recommendedName>
        <fullName>5-aminolevulinate synthase, mitochondrial</fullName>
        <ecNumber>2.3.1.37</ecNumber>
    </recommendedName>
    <alternativeName>
        <fullName>5-aminolevulinic acid synthase</fullName>
    </alternativeName>
    <alternativeName>
        <fullName>Delta-ALA synthase</fullName>
    </alternativeName>
    <alternativeName>
        <fullName>Delta-aminolevulinate synthase</fullName>
    </alternativeName>
</protein>
<reference key="1">
    <citation type="journal article" date="2004" name="Science">
        <title>The Ashbya gossypii genome as a tool for mapping the ancient Saccharomyces cerevisiae genome.</title>
        <authorList>
            <person name="Dietrich F.S."/>
            <person name="Voegeli S."/>
            <person name="Brachat S."/>
            <person name="Lerch A."/>
            <person name="Gates K."/>
            <person name="Steiner S."/>
            <person name="Mohr C."/>
            <person name="Poehlmann R."/>
            <person name="Luedi P."/>
            <person name="Choi S."/>
            <person name="Wing R.A."/>
            <person name="Flavier A."/>
            <person name="Gaffney T.D."/>
            <person name="Philippsen P."/>
        </authorList>
    </citation>
    <scope>NUCLEOTIDE SEQUENCE [LARGE SCALE GENOMIC DNA]</scope>
    <source>
        <strain>ATCC 10895 / CBS 109.51 / FGSC 9923 / NRRL Y-1056</strain>
    </source>
</reference>
<reference key="2">
    <citation type="journal article" date="2013" name="G3 (Bethesda)">
        <title>Genomes of Ashbya fungi isolated from insects reveal four mating-type loci, numerous translocations, lack of transposons, and distinct gene duplications.</title>
        <authorList>
            <person name="Dietrich F.S."/>
            <person name="Voegeli S."/>
            <person name="Kuo S."/>
            <person name="Philippsen P."/>
        </authorList>
    </citation>
    <scope>GENOME REANNOTATION</scope>
    <source>
        <strain>ATCC 10895 / CBS 109.51 / FGSC 9923 / NRRL Y-1056</strain>
    </source>
</reference>
<keyword id="KW-0012">Acyltransferase</keyword>
<keyword id="KW-0350">Heme biosynthesis</keyword>
<keyword id="KW-0496">Mitochondrion</keyword>
<keyword id="KW-0663">Pyridoxal phosphate</keyword>
<keyword id="KW-1185">Reference proteome</keyword>
<keyword id="KW-0808">Transferase</keyword>
<keyword id="KW-0809">Transit peptide</keyword>
<evidence type="ECO:0000250" key="1">
    <source>
        <dbReference type="UniProtKB" id="P09950"/>
    </source>
</evidence>
<evidence type="ECO:0000250" key="2">
    <source>
        <dbReference type="UniProtKB" id="P18079"/>
    </source>
</evidence>
<evidence type="ECO:0000255" key="3"/>
<evidence type="ECO:0000305" key="4"/>
<name>HEM1_EREGS</name>
<organism>
    <name type="scientific">Eremothecium gossypii (strain ATCC 10895 / CBS 109.51 / FGSC 9923 / NRRL Y-1056)</name>
    <name type="common">Yeast</name>
    <name type="synonym">Ashbya gossypii</name>
    <dbReference type="NCBI Taxonomy" id="284811"/>
    <lineage>
        <taxon>Eukaryota</taxon>
        <taxon>Fungi</taxon>
        <taxon>Dikarya</taxon>
        <taxon>Ascomycota</taxon>
        <taxon>Saccharomycotina</taxon>
        <taxon>Saccharomycetes</taxon>
        <taxon>Saccharomycetales</taxon>
        <taxon>Saccharomycetaceae</taxon>
        <taxon>Eremothecium</taxon>
    </lineage>
</organism>
<proteinExistence type="inferred from homology"/>
<gene>
    <name type="primary">HEM1</name>
    <name type="ordered locus">ABL104C</name>
</gene>
<sequence>MDSLARQSAKICPFVSRVTSSMQQVQVLHKTNMSAMAQQCPVMRRAMAARGYVTASPPAGAAAADVGEARPITPVLERGTQERTFDYDGLFETELQKKRLDSSYRFFNNINRLAKEYPMAHRLEEEDKVTVWCSNDYLTYSRNEKVMETMKRTIDKYGAGAGGTRNIAGHNRHAMRLEAELAALHKKEGALVFSSCFVANDAVLSLLGQKMPNMVIFSDEMNHASMIMGIKHANVQKHIFRHNDLQHLEELLAMYPKSQPKLIAFESVYSMSGSVADIRKICDLAEKYGALTFLDEVHSVGLYGPHGAGVAEHLDFEAHRKAGLASPAQTTVLDRVDMITATLGKSFGSVGGYLAASEKLVDFVRSYAPGFIFTSSLPPAVMAGSAAAVFDQRSSLHLRQLQQKHTSYVKTGLGDLGIPVQPNPSHIVPVLVGNPDLAKRASDILMEKHRIYVQAINFPTVPRGTERLRITPTPGHTNDLSDVLLDAMDDVWKTLQLPRVSDWAAHGGLLGVGEPDYVPEANLWTEEQMSLTNDDLHPSVFSPVEKFLEVSSGIKA</sequence>
<accession>Q75DX7</accession>
<comment type="function">
    <text evidence="1">Catalyzes the synthesis of 5-aminolevulinate (ALA) from succinyl-CoA and glycine, the first and rate-limiting step in heme biosynthesis.</text>
</comment>
<comment type="catalytic activity">
    <reaction evidence="1">
        <text>succinyl-CoA + glycine + H(+) = 5-aminolevulinate + CO2 + CoA</text>
        <dbReference type="Rhea" id="RHEA:12921"/>
        <dbReference type="ChEBI" id="CHEBI:15378"/>
        <dbReference type="ChEBI" id="CHEBI:16526"/>
        <dbReference type="ChEBI" id="CHEBI:57287"/>
        <dbReference type="ChEBI" id="CHEBI:57292"/>
        <dbReference type="ChEBI" id="CHEBI:57305"/>
        <dbReference type="ChEBI" id="CHEBI:356416"/>
        <dbReference type="EC" id="2.3.1.37"/>
    </reaction>
</comment>
<comment type="cofactor">
    <cofactor evidence="1">
        <name>pyridoxal 5'-phosphate</name>
        <dbReference type="ChEBI" id="CHEBI:597326"/>
    </cofactor>
</comment>
<comment type="pathway">
    <text evidence="1">Porphyrin-containing compound metabolism; protoporphyrin-IX biosynthesis; 5-aminolevulinate from glycine: step 1/1.</text>
</comment>
<comment type="subunit">
    <text evidence="1">Homodimer.</text>
</comment>
<comment type="subcellular location">
    <subcellularLocation>
        <location evidence="1">Mitochondrion matrix</location>
    </subcellularLocation>
</comment>
<comment type="similarity">
    <text evidence="4">Belongs to the class-II pyridoxal-phosphate-dependent aminotransferase family.</text>
</comment>